<comment type="function">
    <text evidence="3 4 5 7 8 9">Transcriptional activator of evening element (EE)-containing clock-controlled genes (PubMed:23638299, PubMed:35222493). Forms a negative feedback loop with APRR5. Regulates the pattern of histone H3 acetylation of the TOC1 promoter. RVE4, RVE6 and RVE8 are components of the circadian system acting synergistically to regulate flowering time, redundantly to regulate leaf growth, and antagonistically to regulate hypocotyl elongation; their action seems independent of ZTL and HY5 (PubMed:38481435).</text>
</comment>
<comment type="subcellular location">
    <subcellularLocation>
        <location evidence="1">Nucleus</location>
    </subcellularLocation>
</comment>
<comment type="alternative products">
    <event type="alternative splicing"/>
    <isoform>
        <id>Q8RWU3-1</id>
        <name>1</name>
        <name evidence="12">RVE8a</name>
        <sequence type="displayed"/>
    </isoform>
    <isoform>
        <id>Q8RWU3-2</id>
        <name>2</name>
        <name evidence="12">RVE8b</name>
        <sequence type="described" ref="VSP_053512 VSP_053513"/>
    </isoform>
    <isoform>
        <id>Q8RWU3-3</id>
        <name>3</name>
        <name evidence="12">RVE8c</name>
        <sequence type="described" ref="VSP_062457 VSP_062458"/>
    </isoform>
    <text evidence="8">The production of the functional RVE8a isoform is limited by SMP2 in response to light.</text>
</comment>
<comment type="induction">
    <text evidence="3 6 7 9">Circadian-regulation (PubMed:38481435). Peak of expression in the afternoon, and lower levels in darkness (PubMed:38481435). Down-regulated by cold.</text>
</comment>
<comment type="disruption phenotype">
    <text evidence="5 7 9">Delay and reduction in levels of evening-phased clock gene transcripts, and long circadian period (PubMed:21483796, PubMed:23638299, PubMed:38481435). Under constant red plus blue light, extended free-running circadian period in single, double and triple mutants lacking RVE8 and either RVE4 or RVE6, or both of them (PubMed:38481435). Monochromatic blue and red lights have opposite effects on the period of triple mutants rve468 lacking RVE4, RVE6 and RVE8; lack of blue light-specific increase in expression of some circadian clock genes (PubMed:38481435). In long day conditions, rve468 plants have a larger size and a delayed flowering (PubMed:38481435). In short days, rve468 plants exhibit long petioles (PubMed:38481435).</text>
</comment>
<comment type="miscellaneous">
    <text evidence="16">Subject to temperature associated alternative splicing producing mainly non-productive mRNAs.</text>
</comment>
<comment type="sequence caution" evidence="15">
    <conflict type="erroneous gene model prediction">
        <sequence resource="EMBL-CDS" id="AAF23291"/>
    </conflict>
</comment>
<organism>
    <name type="scientific">Arabidopsis thaliana</name>
    <name type="common">Mouse-ear cress</name>
    <dbReference type="NCBI Taxonomy" id="3702"/>
    <lineage>
        <taxon>Eukaryota</taxon>
        <taxon>Viridiplantae</taxon>
        <taxon>Streptophyta</taxon>
        <taxon>Embryophyta</taxon>
        <taxon>Tracheophyta</taxon>
        <taxon>Spermatophyta</taxon>
        <taxon>Magnoliopsida</taxon>
        <taxon>eudicotyledons</taxon>
        <taxon>Gunneridae</taxon>
        <taxon>Pentapetalae</taxon>
        <taxon>rosids</taxon>
        <taxon>malvids</taxon>
        <taxon>Brassicales</taxon>
        <taxon>Brassicaceae</taxon>
        <taxon>Camelineae</taxon>
        <taxon>Arabidopsis</taxon>
    </lineage>
</organism>
<gene>
    <name evidence="10 11" type="primary">RVE8</name>
    <name evidence="11" type="synonym">LCL5</name>
    <name evidence="17" type="ordered locus">At3g09600</name>
    <name evidence="18" type="ORF">F11F8.19</name>
</gene>
<feature type="chain" id="PRO_0000424842" description="Protein REVEILLE 8">
    <location>
        <begin position="1"/>
        <end position="298"/>
    </location>
</feature>
<feature type="domain" description="HTH myb-type" evidence="1">
    <location>
        <begin position="38"/>
        <end position="92"/>
    </location>
</feature>
<feature type="DNA-binding region" description="H-T-H motif" evidence="1">
    <location>
        <begin position="65"/>
        <end position="88"/>
    </location>
</feature>
<feature type="region of interest" description="Disordered" evidence="2">
    <location>
        <begin position="1"/>
        <end position="44"/>
    </location>
</feature>
<feature type="region of interest" description="Disordered" evidence="2">
    <location>
        <begin position="96"/>
        <end position="123"/>
    </location>
</feature>
<feature type="splice variant" id="VSP_053512" description="In isoform 2." evidence="13 14">
    <original>RKVLLSYDNVTTEL</original>
    <variation>SDCNDAAEESPLII</variation>
    <location>
        <begin position="269"/>
        <end position="282"/>
    </location>
</feature>
<feature type="splice variant" id="VSP_062457" description="In isoform 3.">
    <original>RKVLLSYDNV</original>
    <variation>VSVKFAIKDL</variation>
    <location>
        <begin position="269"/>
        <end position="278"/>
    </location>
</feature>
<feature type="splice variant" id="VSP_062458" description="In isoform 3.">
    <location>
        <begin position="279"/>
        <end position="298"/>
    </location>
</feature>
<feature type="splice variant" id="VSP_053513" description="In isoform 2." evidence="13 14">
    <location>
        <begin position="283"/>
        <end position="298"/>
    </location>
</feature>
<sequence length="298" mass="32801">MSSSPSRNPTNAEAPPPPPTSTDAVAEGSSKKVRKPYTITKSRESWTEEEHDKFLEALQLFDRDWKKIEDFVGSKTVIQIRSHAQKYFLKVQKNGTLAHVPPPRPKRKAAHPYPQKASKNAQMPLQVSTSFTTTRNGDMPGYASWDDASMLLNRVISPQHELATLRGAEADIGSKGLLNVSSPSTSGMGSSSRTVSGSEIVRKAKQPPVLHGVPDFAEVYNFIGSVFDPETRGHVEKLKEMDPINFETVLLLMRNLTVNLSNPDLESTRKVLLSYDNVTTELPSVVSLVKNSTSDKSA</sequence>
<reference key="1">
    <citation type="journal article" date="2000" name="Nature">
        <title>Sequence and analysis of chromosome 3 of the plant Arabidopsis thaliana.</title>
        <authorList>
            <person name="Salanoubat M."/>
            <person name="Lemcke K."/>
            <person name="Rieger M."/>
            <person name="Ansorge W."/>
            <person name="Unseld M."/>
            <person name="Fartmann B."/>
            <person name="Valle G."/>
            <person name="Bloecker H."/>
            <person name="Perez-Alonso M."/>
            <person name="Obermaier B."/>
            <person name="Delseny M."/>
            <person name="Boutry M."/>
            <person name="Grivell L.A."/>
            <person name="Mache R."/>
            <person name="Puigdomenech P."/>
            <person name="De Simone V."/>
            <person name="Choisne N."/>
            <person name="Artiguenave F."/>
            <person name="Robert C."/>
            <person name="Brottier P."/>
            <person name="Wincker P."/>
            <person name="Cattolico L."/>
            <person name="Weissenbach J."/>
            <person name="Saurin W."/>
            <person name="Quetier F."/>
            <person name="Schaefer M."/>
            <person name="Mueller-Auer S."/>
            <person name="Gabel C."/>
            <person name="Fuchs M."/>
            <person name="Benes V."/>
            <person name="Wurmbach E."/>
            <person name="Drzonek H."/>
            <person name="Erfle H."/>
            <person name="Jordan N."/>
            <person name="Bangert S."/>
            <person name="Wiedelmann R."/>
            <person name="Kranz H."/>
            <person name="Voss H."/>
            <person name="Holland R."/>
            <person name="Brandt P."/>
            <person name="Nyakatura G."/>
            <person name="Vezzi A."/>
            <person name="D'Angelo M."/>
            <person name="Pallavicini A."/>
            <person name="Toppo S."/>
            <person name="Simionati B."/>
            <person name="Conrad A."/>
            <person name="Hornischer K."/>
            <person name="Kauer G."/>
            <person name="Loehnert T.-H."/>
            <person name="Nordsiek G."/>
            <person name="Reichelt J."/>
            <person name="Scharfe M."/>
            <person name="Schoen O."/>
            <person name="Bargues M."/>
            <person name="Terol J."/>
            <person name="Climent J."/>
            <person name="Navarro P."/>
            <person name="Collado C."/>
            <person name="Perez-Perez A."/>
            <person name="Ottenwaelder B."/>
            <person name="Duchemin D."/>
            <person name="Cooke R."/>
            <person name="Laudie M."/>
            <person name="Berger-Llauro C."/>
            <person name="Purnelle B."/>
            <person name="Masuy D."/>
            <person name="de Haan M."/>
            <person name="Maarse A.C."/>
            <person name="Alcaraz J.-P."/>
            <person name="Cottet A."/>
            <person name="Casacuberta E."/>
            <person name="Monfort A."/>
            <person name="Argiriou A."/>
            <person name="Flores M."/>
            <person name="Liguori R."/>
            <person name="Vitale D."/>
            <person name="Mannhaupt G."/>
            <person name="Haase D."/>
            <person name="Schoof H."/>
            <person name="Rudd S."/>
            <person name="Zaccaria P."/>
            <person name="Mewes H.-W."/>
            <person name="Mayer K.F.X."/>
            <person name="Kaul S."/>
            <person name="Town C.D."/>
            <person name="Koo H.L."/>
            <person name="Tallon L.J."/>
            <person name="Jenkins J."/>
            <person name="Rooney T."/>
            <person name="Rizzo M."/>
            <person name="Walts A."/>
            <person name="Utterback T."/>
            <person name="Fujii C.Y."/>
            <person name="Shea T.P."/>
            <person name="Creasy T.H."/>
            <person name="Haas B."/>
            <person name="Maiti R."/>
            <person name="Wu D."/>
            <person name="Peterson J."/>
            <person name="Van Aken S."/>
            <person name="Pai G."/>
            <person name="Militscher J."/>
            <person name="Sellers P."/>
            <person name="Gill J.E."/>
            <person name="Feldblyum T.V."/>
            <person name="Preuss D."/>
            <person name="Lin X."/>
            <person name="Nierman W.C."/>
            <person name="Salzberg S.L."/>
            <person name="White O."/>
            <person name="Venter J.C."/>
            <person name="Fraser C.M."/>
            <person name="Kaneko T."/>
            <person name="Nakamura Y."/>
            <person name="Sato S."/>
            <person name="Kato T."/>
            <person name="Asamizu E."/>
            <person name="Sasamoto S."/>
            <person name="Kimura T."/>
            <person name="Idesawa K."/>
            <person name="Kawashima K."/>
            <person name="Kishida Y."/>
            <person name="Kiyokawa C."/>
            <person name="Kohara M."/>
            <person name="Matsumoto M."/>
            <person name="Matsuno A."/>
            <person name="Muraki A."/>
            <person name="Nakayama S."/>
            <person name="Nakazaki N."/>
            <person name="Shinpo S."/>
            <person name="Takeuchi C."/>
            <person name="Wada T."/>
            <person name="Watanabe A."/>
            <person name="Yamada M."/>
            <person name="Yasuda M."/>
            <person name="Tabata S."/>
        </authorList>
    </citation>
    <scope>NUCLEOTIDE SEQUENCE [LARGE SCALE GENOMIC DNA]</scope>
    <source>
        <strain>cv. Columbia</strain>
    </source>
</reference>
<reference key="2">
    <citation type="journal article" date="2017" name="Plant J.">
        <title>Araport11: a complete reannotation of the Arabidopsis thaliana reference genome.</title>
        <authorList>
            <person name="Cheng C.Y."/>
            <person name="Krishnakumar V."/>
            <person name="Chan A.P."/>
            <person name="Thibaud-Nissen F."/>
            <person name="Schobel S."/>
            <person name="Town C.D."/>
        </authorList>
    </citation>
    <scope>GENOME REANNOTATION</scope>
    <source>
        <strain>cv. Columbia</strain>
    </source>
</reference>
<reference key="3">
    <citation type="journal article" date="2003" name="Science">
        <title>Empirical analysis of transcriptional activity in the Arabidopsis genome.</title>
        <authorList>
            <person name="Yamada K."/>
            <person name="Lim J."/>
            <person name="Dale J.M."/>
            <person name="Chen H."/>
            <person name="Shinn P."/>
            <person name="Palm C.J."/>
            <person name="Southwick A.M."/>
            <person name="Wu H.C."/>
            <person name="Kim C.J."/>
            <person name="Nguyen M."/>
            <person name="Pham P.K."/>
            <person name="Cheuk R.F."/>
            <person name="Karlin-Newmann G."/>
            <person name="Liu S.X."/>
            <person name="Lam B."/>
            <person name="Sakano H."/>
            <person name="Wu T."/>
            <person name="Yu G."/>
            <person name="Miranda M."/>
            <person name="Quach H.L."/>
            <person name="Tripp M."/>
            <person name="Chang C.H."/>
            <person name="Lee J.M."/>
            <person name="Toriumi M.J."/>
            <person name="Chan M.M."/>
            <person name="Tang C.C."/>
            <person name="Onodera C.S."/>
            <person name="Deng J.M."/>
            <person name="Akiyama K."/>
            <person name="Ansari Y."/>
            <person name="Arakawa T."/>
            <person name="Banh J."/>
            <person name="Banno F."/>
            <person name="Bowser L."/>
            <person name="Brooks S.Y."/>
            <person name="Carninci P."/>
            <person name="Chao Q."/>
            <person name="Choy N."/>
            <person name="Enju A."/>
            <person name="Goldsmith A.D."/>
            <person name="Gurjal M."/>
            <person name="Hansen N.F."/>
            <person name="Hayashizaki Y."/>
            <person name="Johnson-Hopson C."/>
            <person name="Hsuan V.W."/>
            <person name="Iida K."/>
            <person name="Karnes M."/>
            <person name="Khan S."/>
            <person name="Koesema E."/>
            <person name="Ishida J."/>
            <person name="Jiang P.X."/>
            <person name="Jones T."/>
            <person name="Kawai J."/>
            <person name="Kamiya A."/>
            <person name="Meyers C."/>
            <person name="Nakajima M."/>
            <person name="Narusaka M."/>
            <person name="Seki M."/>
            <person name="Sakurai T."/>
            <person name="Satou M."/>
            <person name="Tamse R."/>
            <person name="Vaysberg M."/>
            <person name="Wallender E.K."/>
            <person name="Wong C."/>
            <person name="Yamamura Y."/>
            <person name="Yuan S."/>
            <person name="Shinozaki K."/>
            <person name="Davis R.W."/>
            <person name="Theologis A."/>
            <person name="Ecker J.R."/>
        </authorList>
    </citation>
    <scope>NUCLEOTIDE SEQUENCE [LARGE SCALE MRNA] (ISOFORM 1)</scope>
    <source>
        <strain>cv. Columbia</strain>
    </source>
</reference>
<reference key="4">
    <citation type="submission" date="2004-02" db="EMBL/GenBank/DDBJ databases">
        <title>The MYB transcription factor family in Arabidopsis: a genome-wide cloning and expression pattern analysis.</title>
        <authorList>
            <person name="Qu L."/>
            <person name="Gu H."/>
        </authorList>
    </citation>
    <scope>NUCLEOTIDE SEQUENCE [MRNA] (ISOFORM 2)</scope>
</reference>
<reference key="5">
    <citation type="submission" date="2005-04" db="EMBL/GenBank/DDBJ databases">
        <title>A small family of LHY-CCA1-like (LCL) MYB1R transcription factors: potential co-regulators of the circadian oscillator.</title>
        <authorList>
            <person name="Schmied K.C."/>
            <person name="Merkle T."/>
        </authorList>
    </citation>
    <scope>NUCLEOTIDE SEQUENCE [MRNA] (ISOFORM 2)</scope>
</reference>
<reference key="6">
    <citation type="journal article" date="2009" name="Proc. Natl. Acad. Sci. U.S.A.">
        <title>REVEILLE1, a Myb-like transcription factor, integrates the circadian clock and auxin pathways.</title>
        <authorList>
            <person name="Rawat R."/>
            <person name="Schwartz J."/>
            <person name="Jones M.A."/>
            <person name="Sairanen I."/>
            <person name="Cheng Y."/>
            <person name="Andersson C.R."/>
            <person name="Zhao Y."/>
            <person name="Ljung K."/>
            <person name="Harmer S.L."/>
        </authorList>
    </citation>
    <scope>GENE FAMILY</scope>
    <scope>NOMENCLATURE</scope>
</reference>
<reference key="7">
    <citation type="journal article" date="2011" name="Plant J.">
        <title>Functional implication of the MYB transcription factor RVE8/LCL5 in the circadian control of histone acetylation.</title>
        <authorList>
            <person name="Farinas B."/>
            <person name="Mas P."/>
        </authorList>
    </citation>
    <scope>FUNCTION</scope>
    <scope>INDUCTION</scope>
</reference>
<reference key="8">
    <citation type="journal article" date="2011" name="Plant Signal. Behav.">
        <title>Histone acetylation and the circadian clock: a role for the MYB transcription factor RVE8/LCL5.</title>
        <authorList>
            <person name="Farinas B."/>
            <person name="Mas P."/>
        </authorList>
    </citation>
    <scope>FUNCTION</scope>
</reference>
<reference key="9">
    <citation type="journal article" date="2011" name="PLoS Genet.">
        <title>REVEILLE8 and PSEUDO-RESPONSE REGULATOR5 form a negative feedback loop within the Arabidopsis circadian clock.</title>
        <authorList>
            <person name="Rawat R."/>
            <person name="Takahashi N."/>
            <person name="Hsu P.Y."/>
            <person name="Jones M.A."/>
            <person name="Schwartz J."/>
            <person name="Salemi M.R."/>
            <person name="Phinney B.S."/>
            <person name="Harmer S.L."/>
        </authorList>
    </citation>
    <scope>FUNCTION</scope>
    <scope>DISRUPTION PHENOTYPE</scope>
</reference>
<reference key="10">
    <citation type="journal article" date="2012" name="Plant Signal. Behav.">
        <title>Thermoplasticity in the plant circadian clock: how plants tell the time-perature.</title>
        <authorList>
            <person name="James A.B."/>
            <person name="Syed N.H."/>
            <person name="Brown J.W."/>
            <person name="Nimmo H.G."/>
        </authorList>
    </citation>
    <scope>ALTERNATIVE SPLICING</scope>
    <scope>INDUCTION</scope>
    <scope>REGULATION</scope>
</reference>
<reference key="11">
    <citation type="journal article" date="2013" name="Elife">
        <title>Accurate timekeeping is controlled by a cycling activator in Arabidopsis.</title>
        <authorList>
            <person name="Hsu P.Y."/>
            <person name="Devisetty U.K."/>
            <person name="Harmer S.L."/>
        </authorList>
    </citation>
    <scope>FUNCTION</scope>
    <scope>INDUCTION</scope>
    <scope>DISRUPTION PHENOTYPE</scope>
</reference>
<reference key="12">
    <citation type="journal article" date="2022" name="Front. Plant Sci.">
        <title>SWELLMAP 2, a phyB-interacting splicing factor, negatively regulates seedling photomorphogenesis in Arabidopsis.</title>
        <authorList>
            <person name="Yan T."/>
            <person name="Heng Y."/>
            <person name="Wang W."/>
            <person name="Li J."/>
            <person name="Deng X.W."/>
        </authorList>
    </citation>
    <scope>FUNCTION</scope>
    <scope>ALTERNATIVE SPLICING</scope>
    <source>
        <strain>cv. Columbia</strain>
    </source>
</reference>
<reference key="13">
    <citation type="journal article" date="2024" name="Plant Direct">
        <title>Light quality-dependent roles of REVEILLE proteins in the circadian system.</title>
        <authorList>
            <person name="Hughes C.L."/>
            <person name="An Y."/>
            <person name="Maloof J.N."/>
            <person name="Harmer S.L."/>
        </authorList>
    </citation>
    <scope>FUNCTION</scope>
    <scope>DISRUPTION PHENOTYPE</scope>
    <scope>INDUCTION</scope>
    <source>
        <strain>cv. Columbia</strain>
    </source>
</reference>
<keyword id="KW-0025">Alternative splicing</keyword>
<keyword id="KW-0090">Biological rhythms</keyword>
<keyword id="KW-0238">DNA-binding</keyword>
<keyword id="KW-0539">Nucleus</keyword>
<keyword id="KW-1185">Reference proteome</keyword>
<keyword id="KW-0804">Transcription</keyword>
<keyword id="KW-0805">Transcription regulation</keyword>
<evidence type="ECO:0000255" key="1">
    <source>
        <dbReference type="PROSITE-ProRule" id="PRU00625"/>
    </source>
</evidence>
<evidence type="ECO:0000256" key="2">
    <source>
        <dbReference type="SAM" id="MobiDB-lite"/>
    </source>
</evidence>
<evidence type="ECO:0000269" key="3">
    <source>
    </source>
</evidence>
<evidence type="ECO:0000269" key="4">
    <source>
    </source>
</evidence>
<evidence type="ECO:0000269" key="5">
    <source>
    </source>
</evidence>
<evidence type="ECO:0000269" key="6">
    <source>
    </source>
</evidence>
<evidence type="ECO:0000269" key="7">
    <source>
    </source>
</evidence>
<evidence type="ECO:0000269" key="8">
    <source>
    </source>
</evidence>
<evidence type="ECO:0000269" key="9">
    <source>
    </source>
</evidence>
<evidence type="ECO:0000303" key="10">
    <source>
    </source>
</evidence>
<evidence type="ECO:0000303" key="11">
    <source>
    </source>
</evidence>
<evidence type="ECO:0000303" key="12">
    <source>
    </source>
</evidence>
<evidence type="ECO:0000303" key="13">
    <source ref="4"/>
</evidence>
<evidence type="ECO:0000303" key="14">
    <source ref="5"/>
</evidence>
<evidence type="ECO:0000305" key="15"/>
<evidence type="ECO:0000305" key="16">
    <source>
    </source>
</evidence>
<evidence type="ECO:0000312" key="17">
    <source>
        <dbReference type="Araport" id="AT3G09600"/>
    </source>
</evidence>
<evidence type="ECO:0000312" key="18">
    <source>
        <dbReference type="EMBL" id="AAF23291.1"/>
    </source>
</evidence>
<name>RVE8_ARATH</name>
<dbReference type="EMBL" id="AC016661">
    <property type="protein sequence ID" value="AAF23291.1"/>
    <property type="status" value="ALT_SEQ"/>
    <property type="molecule type" value="Genomic_DNA"/>
</dbReference>
<dbReference type="EMBL" id="CP002686">
    <property type="protein sequence ID" value="AEE74786.1"/>
    <property type="molecule type" value="Genomic_DNA"/>
</dbReference>
<dbReference type="EMBL" id="CP002686">
    <property type="protein sequence ID" value="AEE74787.1"/>
    <property type="molecule type" value="Genomic_DNA"/>
</dbReference>
<dbReference type="EMBL" id="CP002686">
    <property type="protein sequence ID" value="ANM65370.1"/>
    <property type="molecule type" value="Genomic_DNA"/>
</dbReference>
<dbReference type="EMBL" id="CP002686">
    <property type="protein sequence ID" value="ANM65371.1"/>
    <property type="molecule type" value="Genomic_DNA"/>
</dbReference>
<dbReference type="EMBL" id="CP002686">
    <property type="protein sequence ID" value="ANM65373.1"/>
    <property type="molecule type" value="Genomic_DNA"/>
</dbReference>
<dbReference type="EMBL" id="AY091106">
    <property type="protein sequence ID" value="AAM14056.1"/>
    <property type="molecule type" value="mRNA"/>
</dbReference>
<dbReference type="EMBL" id="AY122969">
    <property type="protein sequence ID" value="AAM67502.1"/>
    <property type="molecule type" value="mRNA"/>
</dbReference>
<dbReference type="EMBL" id="AY550307">
    <property type="protein sequence ID" value="AAS58518.1"/>
    <property type="molecule type" value="mRNA"/>
</dbReference>
<dbReference type="EMBL" id="AJ937213">
    <property type="protein sequence ID" value="CAI77454.1"/>
    <property type="molecule type" value="mRNA"/>
</dbReference>
<dbReference type="RefSeq" id="NP_001030662.1">
    <molecule id="Q8RWU3-2"/>
    <property type="nucleotide sequence ID" value="NM_001035585.4"/>
</dbReference>
<dbReference type="RefSeq" id="NP_001327348.1">
    <molecule id="Q8RWU3-1"/>
    <property type="nucleotide sequence ID" value="NM_001337832.1"/>
</dbReference>
<dbReference type="RefSeq" id="NP_001327349.1">
    <molecule id="Q8RWU3-2"/>
    <property type="nucleotide sequence ID" value="NM_001337831.1"/>
</dbReference>
<dbReference type="RefSeq" id="NP_001327351.1">
    <molecule id="Q8RWU3-3"/>
    <property type="nucleotide sequence ID" value="NM_001337829.1"/>
</dbReference>
<dbReference type="RefSeq" id="NP_187571.2">
    <molecule id="Q8RWU3-1"/>
    <property type="nucleotide sequence ID" value="NM_111794.4"/>
</dbReference>
<dbReference type="SMR" id="Q8RWU3"/>
<dbReference type="BioGRID" id="5451">
    <property type="interactions" value="6"/>
</dbReference>
<dbReference type="FunCoup" id="Q8RWU3">
    <property type="interactions" value="54"/>
</dbReference>
<dbReference type="STRING" id="3702.Q8RWU3"/>
<dbReference type="iPTMnet" id="Q8RWU3"/>
<dbReference type="PaxDb" id="3702-AT3G09600.1"/>
<dbReference type="ProteomicsDB" id="208149"/>
<dbReference type="ProteomicsDB" id="232679">
    <molecule id="Q8RWU3-1"/>
</dbReference>
<dbReference type="EnsemblPlants" id="AT3G09600.1">
    <molecule id="Q8RWU3-1"/>
    <property type="protein sequence ID" value="AT3G09600.1"/>
    <property type="gene ID" value="AT3G09600"/>
</dbReference>
<dbReference type="EnsemblPlants" id="AT3G09600.2">
    <molecule id="Q8RWU3-2"/>
    <property type="protein sequence ID" value="AT3G09600.2"/>
    <property type="gene ID" value="AT3G09600"/>
</dbReference>
<dbReference type="EnsemblPlants" id="AT3G09600.4">
    <molecule id="Q8RWU3-3"/>
    <property type="protein sequence ID" value="AT3G09600.4"/>
    <property type="gene ID" value="AT3G09600"/>
</dbReference>
<dbReference type="EnsemblPlants" id="AT3G09600.6">
    <molecule id="Q8RWU3-2"/>
    <property type="protein sequence ID" value="AT3G09600.6"/>
    <property type="gene ID" value="AT3G09600"/>
</dbReference>
<dbReference type="EnsemblPlants" id="AT3G09600.7">
    <molecule id="Q8RWU3-1"/>
    <property type="protein sequence ID" value="AT3G09600.7"/>
    <property type="gene ID" value="AT3G09600"/>
</dbReference>
<dbReference type="GeneID" id="820117"/>
<dbReference type="Gramene" id="AT3G09600.1">
    <molecule id="Q8RWU3-1"/>
    <property type="protein sequence ID" value="AT3G09600.1"/>
    <property type="gene ID" value="AT3G09600"/>
</dbReference>
<dbReference type="Gramene" id="AT3G09600.2">
    <molecule id="Q8RWU3-2"/>
    <property type="protein sequence ID" value="AT3G09600.2"/>
    <property type="gene ID" value="AT3G09600"/>
</dbReference>
<dbReference type="Gramene" id="AT3G09600.4">
    <molecule id="Q8RWU3-3"/>
    <property type="protein sequence ID" value="AT3G09600.4"/>
    <property type="gene ID" value="AT3G09600"/>
</dbReference>
<dbReference type="Gramene" id="AT3G09600.6">
    <molecule id="Q8RWU3-2"/>
    <property type="protein sequence ID" value="AT3G09600.6"/>
    <property type="gene ID" value="AT3G09600"/>
</dbReference>
<dbReference type="Gramene" id="AT3G09600.7">
    <molecule id="Q8RWU3-1"/>
    <property type="protein sequence ID" value="AT3G09600.7"/>
    <property type="gene ID" value="AT3G09600"/>
</dbReference>
<dbReference type="KEGG" id="ath:AT3G09600"/>
<dbReference type="Araport" id="AT3G09600"/>
<dbReference type="TAIR" id="AT3G09600">
    <property type="gene designation" value="RVE8"/>
</dbReference>
<dbReference type="eggNOG" id="KOG0724">
    <property type="taxonomic scope" value="Eukaryota"/>
</dbReference>
<dbReference type="InParanoid" id="Q8RWU3"/>
<dbReference type="OMA" id="AEGMLFH"/>
<dbReference type="OrthoDB" id="118550at2759"/>
<dbReference type="PhylomeDB" id="Q8RWU3"/>
<dbReference type="PRO" id="PR:Q8RWU3"/>
<dbReference type="Proteomes" id="UP000006548">
    <property type="component" value="Chromosome 3"/>
</dbReference>
<dbReference type="ExpressionAtlas" id="Q8RWU3">
    <property type="expression patterns" value="baseline and differential"/>
</dbReference>
<dbReference type="GO" id="GO:0005634">
    <property type="term" value="C:nucleus"/>
    <property type="evidence" value="ECO:0007669"/>
    <property type="project" value="UniProtKB-SubCell"/>
</dbReference>
<dbReference type="GO" id="GO:0003700">
    <property type="term" value="F:DNA-binding transcription factor activity"/>
    <property type="evidence" value="ECO:0000250"/>
    <property type="project" value="TAIR"/>
</dbReference>
<dbReference type="GO" id="GO:0043565">
    <property type="term" value="F:sequence-specific DNA binding"/>
    <property type="evidence" value="ECO:0000314"/>
    <property type="project" value="TAIR"/>
</dbReference>
<dbReference type="GO" id="GO:0048512">
    <property type="term" value="P:circadian behavior"/>
    <property type="evidence" value="ECO:0000270"/>
    <property type="project" value="UniProtKB"/>
</dbReference>
<dbReference type="GO" id="GO:0032922">
    <property type="term" value="P:circadian regulation of gene expression"/>
    <property type="evidence" value="ECO:0000315"/>
    <property type="project" value="UniProtKB"/>
</dbReference>
<dbReference type="GO" id="GO:0007623">
    <property type="term" value="P:circadian rhythm"/>
    <property type="evidence" value="ECO:0000315"/>
    <property type="project" value="UniProtKB"/>
</dbReference>
<dbReference type="GO" id="GO:0043153">
    <property type="term" value="P:entrainment of circadian clock by photoperiod"/>
    <property type="evidence" value="ECO:0000315"/>
    <property type="project" value="UniProtKB"/>
</dbReference>
<dbReference type="GO" id="GO:0048573">
    <property type="term" value="P:photoperiodism, flowering"/>
    <property type="evidence" value="ECO:0000315"/>
    <property type="project" value="TAIR"/>
</dbReference>
<dbReference type="GO" id="GO:0042753">
    <property type="term" value="P:positive regulation of circadian rhythm"/>
    <property type="evidence" value="ECO:0000315"/>
    <property type="project" value="TAIR"/>
</dbReference>
<dbReference type="GO" id="GO:0010628">
    <property type="term" value="P:positive regulation of gene expression"/>
    <property type="evidence" value="ECO:0000315"/>
    <property type="project" value="TAIR"/>
</dbReference>
<dbReference type="GO" id="GO:0045944">
    <property type="term" value="P:positive regulation of transcription by RNA polymerase II"/>
    <property type="evidence" value="ECO:0000315"/>
    <property type="project" value="TAIR"/>
</dbReference>
<dbReference type="GO" id="GO:0042752">
    <property type="term" value="P:regulation of circadian rhythm"/>
    <property type="evidence" value="ECO:0000316"/>
    <property type="project" value="TAIR"/>
</dbReference>
<dbReference type="GO" id="GO:0006355">
    <property type="term" value="P:regulation of DNA-templated transcription"/>
    <property type="evidence" value="ECO:0000304"/>
    <property type="project" value="TAIR"/>
</dbReference>
<dbReference type="GO" id="GO:2000024">
    <property type="term" value="P:regulation of leaf development"/>
    <property type="evidence" value="ECO:0000315"/>
    <property type="project" value="UniProtKB"/>
</dbReference>
<dbReference type="GO" id="GO:0010099">
    <property type="term" value="P:regulation of photomorphogenesis"/>
    <property type="evidence" value="ECO:0000315"/>
    <property type="project" value="UniProtKB"/>
</dbReference>
<dbReference type="GO" id="GO:2000028">
    <property type="term" value="P:regulation of photoperiodism, flowering"/>
    <property type="evidence" value="ECO:0000315"/>
    <property type="project" value="UniProtKB"/>
</dbReference>
<dbReference type="GO" id="GO:0009637">
    <property type="term" value="P:response to blue light"/>
    <property type="evidence" value="ECO:0000315"/>
    <property type="project" value="UniProtKB"/>
</dbReference>
<dbReference type="GO" id="GO:0010114">
    <property type="term" value="P:response to red light"/>
    <property type="evidence" value="ECO:0000315"/>
    <property type="project" value="UniProtKB"/>
</dbReference>
<dbReference type="CDD" id="cd00167">
    <property type="entry name" value="SANT"/>
    <property type="match status" value="1"/>
</dbReference>
<dbReference type="FunFam" id="1.10.10.60:FF:000023">
    <property type="entry name" value="protein REVEILLE 6 isoform X1"/>
    <property type="match status" value="1"/>
</dbReference>
<dbReference type="Gene3D" id="1.10.10.60">
    <property type="entry name" value="Homeodomain-like"/>
    <property type="match status" value="1"/>
</dbReference>
<dbReference type="InterPro" id="IPR009057">
    <property type="entry name" value="Homeodomain-like_sf"/>
</dbReference>
<dbReference type="InterPro" id="IPR017930">
    <property type="entry name" value="Myb_dom"/>
</dbReference>
<dbReference type="InterPro" id="IPR006447">
    <property type="entry name" value="Myb_dom_plants"/>
</dbReference>
<dbReference type="InterPro" id="IPR001005">
    <property type="entry name" value="SANT/Myb"/>
</dbReference>
<dbReference type="InterPro" id="IPR017884">
    <property type="entry name" value="SANT_dom"/>
</dbReference>
<dbReference type="NCBIfam" id="TIGR01557">
    <property type="entry name" value="myb_SHAQKYF"/>
    <property type="match status" value="1"/>
</dbReference>
<dbReference type="PANTHER" id="PTHR12802:SF115">
    <property type="entry name" value="PROTEIN REVEILLE 8"/>
    <property type="match status" value="1"/>
</dbReference>
<dbReference type="PANTHER" id="PTHR12802">
    <property type="entry name" value="SWI/SNF COMPLEX-RELATED"/>
    <property type="match status" value="1"/>
</dbReference>
<dbReference type="Pfam" id="PF00249">
    <property type="entry name" value="Myb_DNA-binding"/>
    <property type="match status" value="1"/>
</dbReference>
<dbReference type="Pfam" id="PF24904">
    <property type="entry name" value="RVE6"/>
    <property type="match status" value="1"/>
</dbReference>
<dbReference type="SMART" id="SM00717">
    <property type="entry name" value="SANT"/>
    <property type="match status" value="1"/>
</dbReference>
<dbReference type="SUPFAM" id="SSF46689">
    <property type="entry name" value="Homeodomain-like"/>
    <property type="match status" value="1"/>
</dbReference>
<dbReference type="PROSITE" id="PS51294">
    <property type="entry name" value="HTH_MYB"/>
    <property type="match status" value="1"/>
</dbReference>
<protein>
    <recommendedName>
        <fullName evidence="10 11">Protein REVEILLE 8</fullName>
    </recommendedName>
    <alternativeName>
        <fullName evidence="15">MYB-like transcription factor RVE8</fullName>
    </alternativeName>
    <alternativeName>
        <fullName evidence="11">Protein LHY-CCA1-like 5</fullName>
    </alternativeName>
</protein>
<proteinExistence type="evidence at transcript level"/>
<accession>Q8RWU3</accession>
<accession>A0A1I9LS15</accession>
<accession>Q6QAC9</accession>
<accession>Q9SF43</accession>